<reference key="1">
    <citation type="journal article" date="2001" name="Nature">
        <title>Complete genome sequence of a multiple drug resistant Salmonella enterica serovar Typhi CT18.</title>
        <authorList>
            <person name="Parkhill J."/>
            <person name="Dougan G."/>
            <person name="James K.D."/>
            <person name="Thomson N.R."/>
            <person name="Pickard D."/>
            <person name="Wain J."/>
            <person name="Churcher C.M."/>
            <person name="Mungall K.L."/>
            <person name="Bentley S.D."/>
            <person name="Holden M.T.G."/>
            <person name="Sebaihia M."/>
            <person name="Baker S."/>
            <person name="Basham D."/>
            <person name="Brooks K."/>
            <person name="Chillingworth T."/>
            <person name="Connerton P."/>
            <person name="Cronin A."/>
            <person name="Davis P."/>
            <person name="Davies R.M."/>
            <person name="Dowd L."/>
            <person name="White N."/>
            <person name="Farrar J."/>
            <person name="Feltwell T."/>
            <person name="Hamlin N."/>
            <person name="Haque A."/>
            <person name="Hien T.T."/>
            <person name="Holroyd S."/>
            <person name="Jagels K."/>
            <person name="Krogh A."/>
            <person name="Larsen T.S."/>
            <person name="Leather S."/>
            <person name="Moule S."/>
            <person name="O'Gaora P."/>
            <person name="Parry C."/>
            <person name="Quail M.A."/>
            <person name="Rutherford K.M."/>
            <person name="Simmonds M."/>
            <person name="Skelton J."/>
            <person name="Stevens K."/>
            <person name="Whitehead S."/>
            <person name="Barrell B.G."/>
        </authorList>
    </citation>
    <scope>NUCLEOTIDE SEQUENCE [LARGE SCALE GENOMIC DNA]</scope>
    <source>
        <strain>CT18</strain>
    </source>
</reference>
<reference key="2">
    <citation type="journal article" date="2003" name="J. Bacteriol.">
        <title>Comparative genomics of Salmonella enterica serovar Typhi strains Ty2 and CT18.</title>
        <authorList>
            <person name="Deng W."/>
            <person name="Liou S.-R."/>
            <person name="Plunkett G. III"/>
            <person name="Mayhew G.F."/>
            <person name="Rose D.J."/>
            <person name="Burland V."/>
            <person name="Kodoyianni V."/>
            <person name="Schwartz D.C."/>
            <person name="Blattner F.R."/>
        </authorList>
    </citation>
    <scope>NUCLEOTIDE SEQUENCE [LARGE SCALE GENOMIC DNA]</scope>
    <source>
        <strain>ATCC 700931 / Ty2</strain>
    </source>
</reference>
<gene>
    <name evidence="1" type="primary">yqgE</name>
    <name type="ordered locus">STY3249</name>
    <name type="ordered locus">t3008</name>
</gene>
<accession>Q8Z3V2</accession>
<organism>
    <name type="scientific">Salmonella typhi</name>
    <dbReference type="NCBI Taxonomy" id="90370"/>
    <lineage>
        <taxon>Bacteria</taxon>
        <taxon>Pseudomonadati</taxon>
        <taxon>Pseudomonadota</taxon>
        <taxon>Gammaproteobacteria</taxon>
        <taxon>Enterobacterales</taxon>
        <taxon>Enterobacteriaceae</taxon>
        <taxon>Salmonella</taxon>
    </lineage>
</organism>
<feature type="chain" id="PRO_0000214344" description="UPF0301 protein YqgE">
    <location>
        <begin position="1"/>
        <end position="187"/>
    </location>
</feature>
<sequence>MNLQHHFLIAMPALQDPIFRRSVVYICEHNQDGAMGIIINKPLENLQIEGILEKLKITPEPRDSAIRLDKAVMLGGPLAEDRGFILHTPPSRFASSIRISDNTVITTSRDVLETLGTQQQPSDVLVALGYASWDKGQLEQELLDNAWLTAPADLNILFKTPIAERWREAAKLIGIDILTMPGVAGHA</sequence>
<evidence type="ECO:0000255" key="1">
    <source>
        <dbReference type="HAMAP-Rule" id="MF_00758"/>
    </source>
</evidence>
<dbReference type="EMBL" id="AL513382">
    <property type="protein sequence ID" value="CAD02920.1"/>
    <property type="molecule type" value="Genomic_DNA"/>
</dbReference>
<dbReference type="EMBL" id="AE014613">
    <property type="protein sequence ID" value="AAO70560.1"/>
    <property type="molecule type" value="Genomic_DNA"/>
</dbReference>
<dbReference type="RefSeq" id="NP_457488.1">
    <property type="nucleotide sequence ID" value="NC_003198.1"/>
</dbReference>
<dbReference type="RefSeq" id="WP_001053167.1">
    <property type="nucleotide sequence ID" value="NZ_WSUR01000049.1"/>
</dbReference>
<dbReference type="SMR" id="Q8Z3V2"/>
<dbReference type="STRING" id="220341.gene:17587122"/>
<dbReference type="KEGG" id="stt:t3008"/>
<dbReference type="KEGG" id="sty:STY3249"/>
<dbReference type="PATRIC" id="fig|220341.7.peg.3313"/>
<dbReference type="eggNOG" id="COG1678">
    <property type="taxonomic scope" value="Bacteria"/>
</dbReference>
<dbReference type="HOGENOM" id="CLU_057596_1_0_6"/>
<dbReference type="OMA" id="GAWYVVE"/>
<dbReference type="OrthoDB" id="9807486at2"/>
<dbReference type="Proteomes" id="UP000000541">
    <property type="component" value="Chromosome"/>
</dbReference>
<dbReference type="Proteomes" id="UP000002670">
    <property type="component" value="Chromosome"/>
</dbReference>
<dbReference type="GO" id="GO:0005829">
    <property type="term" value="C:cytosol"/>
    <property type="evidence" value="ECO:0007669"/>
    <property type="project" value="TreeGrafter"/>
</dbReference>
<dbReference type="FunFam" id="3.30.70.1300:FF:000001">
    <property type="entry name" value="UPF0301 protein YqgE"/>
    <property type="match status" value="1"/>
</dbReference>
<dbReference type="Gene3D" id="3.40.1740.10">
    <property type="entry name" value="VC0467-like"/>
    <property type="match status" value="1"/>
</dbReference>
<dbReference type="Gene3D" id="3.30.70.1300">
    <property type="entry name" value="VC0467-like domains"/>
    <property type="match status" value="1"/>
</dbReference>
<dbReference type="HAMAP" id="MF_00758">
    <property type="entry name" value="UPF0301"/>
    <property type="match status" value="1"/>
</dbReference>
<dbReference type="InterPro" id="IPR003774">
    <property type="entry name" value="AlgH-like"/>
</dbReference>
<dbReference type="NCBIfam" id="NF001266">
    <property type="entry name" value="PRK00228.1-1"/>
    <property type="match status" value="1"/>
</dbReference>
<dbReference type="PANTHER" id="PTHR30327">
    <property type="entry name" value="UNCHARACTERIZED PROTEIN YQGE"/>
    <property type="match status" value="1"/>
</dbReference>
<dbReference type="PANTHER" id="PTHR30327:SF1">
    <property type="entry name" value="UPF0301 PROTEIN YQGE"/>
    <property type="match status" value="1"/>
</dbReference>
<dbReference type="Pfam" id="PF02622">
    <property type="entry name" value="DUF179"/>
    <property type="match status" value="1"/>
</dbReference>
<dbReference type="SUPFAM" id="SSF143456">
    <property type="entry name" value="VC0467-like"/>
    <property type="match status" value="1"/>
</dbReference>
<comment type="similarity">
    <text evidence="1">Belongs to the UPF0301 (AlgH) family.</text>
</comment>
<protein>
    <recommendedName>
        <fullName evidence="1">UPF0301 protein YqgE</fullName>
    </recommendedName>
</protein>
<name>YQGE_SALTI</name>
<proteinExistence type="inferred from homology"/>